<dbReference type="EC" id="4.2.1.20" evidence="1"/>
<dbReference type="EMBL" id="AL591980">
    <property type="protein sequence ID" value="CAC99706.1"/>
    <property type="molecule type" value="Genomic_DNA"/>
</dbReference>
<dbReference type="PIR" id="AD1278">
    <property type="entry name" value="AD1278"/>
</dbReference>
<dbReference type="RefSeq" id="NP_465153.1">
    <property type="nucleotide sequence ID" value="NC_003210.1"/>
</dbReference>
<dbReference type="RefSeq" id="WP_003723934.1">
    <property type="nucleotide sequence ID" value="NZ_CP149495.1"/>
</dbReference>
<dbReference type="SMR" id="Q8Y6Q6"/>
<dbReference type="STRING" id="169963.gene:17594285"/>
<dbReference type="PaxDb" id="169963-lmo1628"/>
<dbReference type="EnsemblBacteria" id="CAC99706">
    <property type="protein sequence ID" value="CAC99706"/>
    <property type="gene ID" value="CAC99706"/>
</dbReference>
<dbReference type="GeneID" id="985710"/>
<dbReference type="KEGG" id="lmo:lmo1628"/>
<dbReference type="PATRIC" id="fig|169963.11.peg.1671"/>
<dbReference type="eggNOG" id="COG0133">
    <property type="taxonomic scope" value="Bacteria"/>
</dbReference>
<dbReference type="HOGENOM" id="CLU_016734_3_1_9"/>
<dbReference type="OrthoDB" id="9766131at2"/>
<dbReference type="PhylomeDB" id="Q8Y6Q6"/>
<dbReference type="BioCyc" id="LMON169963:LMO1628-MONOMER"/>
<dbReference type="UniPathway" id="UPA00035">
    <property type="reaction ID" value="UER00044"/>
</dbReference>
<dbReference type="Proteomes" id="UP000000817">
    <property type="component" value="Chromosome"/>
</dbReference>
<dbReference type="GO" id="GO:0005737">
    <property type="term" value="C:cytoplasm"/>
    <property type="evidence" value="ECO:0000318"/>
    <property type="project" value="GO_Central"/>
</dbReference>
<dbReference type="GO" id="GO:0004834">
    <property type="term" value="F:tryptophan synthase activity"/>
    <property type="evidence" value="ECO:0007669"/>
    <property type="project" value="UniProtKB-UniRule"/>
</dbReference>
<dbReference type="GO" id="GO:0000162">
    <property type="term" value="P:L-tryptophan biosynthetic process"/>
    <property type="evidence" value="ECO:0000318"/>
    <property type="project" value="GO_Central"/>
</dbReference>
<dbReference type="CDD" id="cd06446">
    <property type="entry name" value="Trp-synth_B"/>
    <property type="match status" value="1"/>
</dbReference>
<dbReference type="FunFam" id="3.40.50.1100:FF:000001">
    <property type="entry name" value="Tryptophan synthase beta chain"/>
    <property type="match status" value="1"/>
</dbReference>
<dbReference type="FunFam" id="3.40.50.1100:FF:000004">
    <property type="entry name" value="Tryptophan synthase beta chain"/>
    <property type="match status" value="1"/>
</dbReference>
<dbReference type="Gene3D" id="3.40.50.1100">
    <property type="match status" value="2"/>
</dbReference>
<dbReference type="HAMAP" id="MF_00133">
    <property type="entry name" value="Trp_synth_beta"/>
    <property type="match status" value="1"/>
</dbReference>
<dbReference type="InterPro" id="IPR006653">
    <property type="entry name" value="Trp_synth_b_CS"/>
</dbReference>
<dbReference type="InterPro" id="IPR006654">
    <property type="entry name" value="Trp_synth_beta"/>
</dbReference>
<dbReference type="InterPro" id="IPR023026">
    <property type="entry name" value="Trp_synth_beta/beta-like"/>
</dbReference>
<dbReference type="InterPro" id="IPR001926">
    <property type="entry name" value="TrpB-like_PALP"/>
</dbReference>
<dbReference type="InterPro" id="IPR036052">
    <property type="entry name" value="TrpB-like_PALP_sf"/>
</dbReference>
<dbReference type="NCBIfam" id="TIGR00263">
    <property type="entry name" value="trpB"/>
    <property type="match status" value="1"/>
</dbReference>
<dbReference type="PANTHER" id="PTHR48077:SF3">
    <property type="entry name" value="TRYPTOPHAN SYNTHASE"/>
    <property type="match status" value="1"/>
</dbReference>
<dbReference type="PANTHER" id="PTHR48077">
    <property type="entry name" value="TRYPTOPHAN SYNTHASE-RELATED"/>
    <property type="match status" value="1"/>
</dbReference>
<dbReference type="Pfam" id="PF00291">
    <property type="entry name" value="PALP"/>
    <property type="match status" value="1"/>
</dbReference>
<dbReference type="PIRSF" id="PIRSF001413">
    <property type="entry name" value="Trp_syn_beta"/>
    <property type="match status" value="1"/>
</dbReference>
<dbReference type="SUPFAM" id="SSF53686">
    <property type="entry name" value="Tryptophan synthase beta subunit-like PLP-dependent enzymes"/>
    <property type="match status" value="1"/>
</dbReference>
<dbReference type="PROSITE" id="PS00168">
    <property type="entry name" value="TRP_SYNTHASE_BETA"/>
    <property type="match status" value="1"/>
</dbReference>
<proteinExistence type="inferred from homology"/>
<gene>
    <name evidence="1" type="primary">trpB</name>
    <name type="ordered locus">lmo1628</name>
</gene>
<name>TRPB_LISMO</name>
<accession>Q8Y6Q6</accession>
<feature type="chain" id="PRO_0000098966" description="Tryptophan synthase beta chain">
    <location>
        <begin position="1"/>
        <end position="400"/>
    </location>
</feature>
<feature type="modified residue" description="N6-(pyridoxal phosphate)lysine" evidence="1">
    <location>
        <position position="91"/>
    </location>
</feature>
<organism>
    <name type="scientific">Listeria monocytogenes serovar 1/2a (strain ATCC BAA-679 / EGD-e)</name>
    <dbReference type="NCBI Taxonomy" id="169963"/>
    <lineage>
        <taxon>Bacteria</taxon>
        <taxon>Bacillati</taxon>
        <taxon>Bacillota</taxon>
        <taxon>Bacilli</taxon>
        <taxon>Bacillales</taxon>
        <taxon>Listeriaceae</taxon>
        <taxon>Listeria</taxon>
    </lineage>
</organism>
<sequence length="400" mass="43721">MTYQAPDENGFYGKFGGRFVPETLMKAVKELDEAYQASKTDPAFQKELNYYLKEYVGRETPLYFAEQLTAHAGGAKIYLKREDLNHTGAHKINNTIGQALLARQMGKQKVVAETGAGQHGVATATVAALFNMKCTIFMGEEDVKRQSLNVFRMELLGAKVVSVKAGSRTLKDAVNEALRFWVANVEDTHYIMGSVLGPHPFPEIVRDYQSVIGIEARKQHLEKEGKLPDAIVACVGGGSNAMGLFYPFVDDASVQMHGVEAAGHGLETEFHAATISKGEIGILHGAMMDVLQDENGQILEAFSISAGLDYPGIGPEHSFFRDLGRAAYHSVTDDEAVEAFQLLCRTEGIIPALESSHAISYAVKLASKMRPEESMVVCLSGRGDKDVNQLKERLEGQTND</sequence>
<keyword id="KW-0028">Amino-acid biosynthesis</keyword>
<keyword id="KW-0057">Aromatic amino acid biosynthesis</keyword>
<keyword id="KW-0456">Lyase</keyword>
<keyword id="KW-0663">Pyridoxal phosphate</keyword>
<keyword id="KW-1185">Reference proteome</keyword>
<keyword id="KW-0822">Tryptophan biosynthesis</keyword>
<protein>
    <recommendedName>
        <fullName evidence="1">Tryptophan synthase beta chain</fullName>
        <ecNumber evidence="1">4.2.1.20</ecNumber>
    </recommendedName>
</protein>
<reference key="1">
    <citation type="journal article" date="2001" name="Science">
        <title>Comparative genomics of Listeria species.</title>
        <authorList>
            <person name="Glaser P."/>
            <person name="Frangeul L."/>
            <person name="Buchrieser C."/>
            <person name="Rusniok C."/>
            <person name="Amend A."/>
            <person name="Baquero F."/>
            <person name="Berche P."/>
            <person name="Bloecker H."/>
            <person name="Brandt P."/>
            <person name="Chakraborty T."/>
            <person name="Charbit A."/>
            <person name="Chetouani F."/>
            <person name="Couve E."/>
            <person name="de Daruvar A."/>
            <person name="Dehoux P."/>
            <person name="Domann E."/>
            <person name="Dominguez-Bernal G."/>
            <person name="Duchaud E."/>
            <person name="Durant L."/>
            <person name="Dussurget O."/>
            <person name="Entian K.-D."/>
            <person name="Fsihi H."/>
            <person name="Garcia-del Portillo F."/>
            <person name="Garrido P."/>
            <person name="Gautier L."/>
            <person name="Goebel W."/>
            <person name="Gomez-Lopez N."/>
            <person name="Hain T."/>
            <person name="Hauf J."/>
            <person name="Jackson D."/>
            <person name="Jones L.-M."/>
            <person name="Kaerst U."/>
            <person name="Kreft J."/>
            <person name="Kuhn M."/>
            <person name="Kunst F."/>
            <person name="Kurapkat G."/>
            <person name="Madueno E."/>
            <person name="Maitournam A."/>
            <person name="Mata Vicente J."/>
            <person name="Ng E."/>
            <person name="Nedjari H."/>
            <person name="Nordsiek G."/>
            <person name="Novella S."/>
            <person name="de Pablos B."/>
            <person name="Perez-Diaz J.-C."/>
            <person name="Purcell R."/>
            <person name="Remmel B."/>
            <person name="Rose M."/>
            <person name="Schlueter T."/>
            <person name="Simoes N."/>
            <person name="Tierrez A."/>
            <person name="Vazquez-Boland J.-A."/>
            <person name="Voss H."/>
            <person name="Wehland J."/>
            <person name="Cossart P."/>
        </authorList>
    </citation>
    <scope>NUCLEOTIDE SEQUENCE [LARGE SCALE GENOMIC DNA]</scope>
    <source>
        <strain>ATCC BAA-679 / EGD-e</strain>
    </source>
</reference>
<evidence type="ECO:0000255" key="1">
    <source>
        <dbReference type="HAMAP-Rule" id="MF_00133"/>
    </source>
</evidence>
<comment type="function">
    <text evidence="1">The beta subunit is responsible for the synthesis of L-tryptophan from indole and L-serine.</text>
</comment>
<comment type="catalytic activity">
    <reaction evidence="1">
        <text>(1S,2R)-1-C-(indol-3-yl)glycerol 3-phosphate + L-serine = D-glyceraldehyde 3-phosphate + L-tryptophan + H2O</text>
        <dbReference type="Rhea" id="RHEA:10532"/>
        <dbReference type="ChEBI" id="CHEBI:15377"/>
        <dbReference type="ChEBI" id="CHEBI:33384"/>
        <dbReference type="ChEBI" id="CHEBI:57912"/>
        <dbReference type="ChEBI" id="CHEBI:58866"/>
        <dbReference type="ChEBI" id="CHEBI:59776"/>
        <dbReference type="EC" id="4.2.1.20"/>
    </reaction>
</comment>
<comment type="cofactor">
    <cofactor evidence="1">
        <name>pyridoxal 5'-phosphate</name>
        <dbReference type="ChEBI" id="CHEBI:597326"/>
    </cofactor>
</comment>
<comment type="pathway">
    <text evidence="1">Amino-acid biosynthesis; L-tryptophan biosynthesis; L-tryptophan from chorismate: step 5/5.</text>
</comment>
<comment type="subunit">
    <text evidence="1">Tetramer of two alpha and two beta chains.</text>
</comment>
<comment type="similarity">
    <text evidence="1">Belongs to the TrpB family.</text>
</comment>